<evidence type="ECO:0000250" key="1">
    <source>
        <dbReference type="UniProtKB" id="P0C0S5"/>
    </source>
</evidence>
<evidence type="ECO:0000250" key="2">
    <source>
        <dbReference type="UniProtKB" id="P0C0S8"/>
    </source>
</evidence>
<evidence type="ECO:0000250" key="3">
    <source>
        <dbReference type="UniProtKB" id="P22752"/>
    </source>
</evidence>
<evidence type="ECO:0000250" key="4">
    <source>
        <dbReference type="UniProtKB" id="Q8R1M2"/>
    </source>
</evidence>
<evidence type="ECO:0000305" key="5"/>
<protein>
    <recommendedName>
        <fullName>Histone H2A type 4</fullName>
    </recommendedName>
    <alternativeName>
        <fullName>Histone H2A, testis</fullName>
        <shortName>TH2A</shortName>
    </alternativeName>
</protein>
<accession>Q00728</accession>
<organism>
    <name type="scientific">Rattus norvegicus</name>
    <name type="common">Rat</name>
    <dbReference type="NCBI Taxonomy" id="10116"/>
    <lineage>
        <taxon>Eukaryota</taxon>
        <taxon>Metazoa</taxon>
        <taxon>Chordata</taxon>
        <taxon>Craniata</taxon>
        <taxon>Vertebrata</taxon>
        <taxon>Euteleostomi</taxon>
        <taxon>Mammalia</taxon>
        <taxon>Eutheria</taxon>
        <taxon>Euarchontoglires</taxon>
        <taxon>Glires</taxon>
        <taxon>Rodentia</taxon>
        <taxon>Myomorpha</taxon>
        <taxon>Muroidea</taxon>
        <taxon>Muridae</taxon>
        <taxon>Murinae</taxon>
        <taxon>Rattus</taxon>
    </lineage>
</organism>
<keyword id="KW-0007">Acetylation</keyword>
<keyword id="KW-0158">Chromosome</keyword>
<keyword id="KW-0164">Citrullination</keyword>
<keyword id="KW-0238">DNA-binding</keyword>
<keyword id="KW-0379">Hydroxylation</keyword>
<keyword id="KW-1017">Isopeptide bond</keyword>
<keyword id="KW-0488">Methylation</keyword>
<keyword id="KW-0544">Nucleosome core</keyword>
<keyword id="KW-0539">Nucleus</keyword>
<keyword id="KW-0597">Phosphoprotein</keyword>
<keyword id="KW-1185">Reference proteome</keyword>
<keyword id="KW-0832">Ubl conjugation</keyword>
<name>H2A4_RAT</name>
<sequence>MSGRAKQGGKARAKAKSRSFRAGLQFPVGRVHRLLRQGNYAERIGAGTPVYLAAVLEYLTAEILELAGNAARDNKKTRIIPRHLQLAIRNDEELNKLLGRVTIAQGGVLPNIQAVLLPKKTESHHKSQTK</sequence>
<proteinExistence type="evidence at transcript level"/>
<dbReference type="EMBL" id="X59962">
    <property type="protein sequence ID" value="CAA42588.1"/>
    <property type="molecule type" value="Genomic_DNA"/>
</dbReference>
<dbReference type="PIR" id="S26188">
    <property type="entry name" value="S26188"/>
</dbReference>
<dbReference type="RefSeq" id="NP_068611.1">
    <property type="nucleotide sequence ID" value="NM_021839.2"/>
</dbReference>
<dbReference type="SMR" id="Q00728"/>
<dbReference type="BioGRID" id="246948">
    <property type="interactions" value="1"/>
</dbReference>
<dbReference type="FunCoup" id="Q00728">
    <property type="interactions" value="382"/>
</dbReference>
<dbReference type="STRING" id="10116.ENSRNOP00000039289"/>
<dbReference type="PhosphoSitePlus" id="Q00728"/>
<dbReference type="jPOST" id="Q00728"/>
<dbReference type="PaxDb" id="10116-ENSRNOP00000039289"/>
<dbReference type="Ensembl" id="ENSRNOT00000102312.1">
    <property type="protein sequence ID" value="ENSRNOP00000096965.1"/>
    <property type="gene ID" value="ENSRNOG00000065352.1"/>
</dbReference>
<dbReference type="Ensembl" id="ENSRNOT00000105541.1">
    <property type="protein sequence ID" value="ENSRNOP00000094005.1"/>
    <property type="gene ID" value="ENSRNOG00000065352.1"/>
</dbReference>
<dbReference type="Ensembl" id="ENSRNOT00000113852.1">
    <property type="protein sequence ID" value="ENSRNOP00000088231.1"/>
    <property type="gene ID" value="ENSRNOG00000065352.1"/>
</dbReference>
<dbReference type="GeneID" id="24828"/>
<dbReference type="KEGG" id="rno:24828"/>
<dbReference type="UCSC" id="RGD:3854">
    <property type="organism name" value="rat"/>
</dbReference>
<dbReference type="AGR" id="RGD:3854"/>
<dbReference type="CTD" id="221613"/>
<dbReference type="eggNOG" id="KOG1756">
    <property type="taxonomic scope" value="Eukaryota"/>
</dbReference>
<dbReference type="GeneTree" id="ENSGT00940000161385"/>
<dbReference type="HOGENOM" id="CLU_062828_3_1_1"/>
<dbReference type="InParanoid" id="Q00728"/>
<dbReference type="OMA" id="THHKAQA"/>
<dbReference type="OrthoDB" id="9608857at2759"/>
<dbReference type="PhylomeDB" id="Q00728"/>
<dbReference type="TreeFam" id="TF300137"/>
<dbReference type="PRO" id="PR:Q00728"/>
<dbReference type="Proteomes" id="UP000002494">
    <property type="component" value="Chromosome 17"/>
</dbReference>
<dbReference type="Bgee" id="ENSRNOG00000048122">
    <property type="expression patterns" value="Expressed in testis and 5 other cell types or tissues"/>
</dbReference>
<dbReference type="GO" id="GO:0001674">
    <property type="term" value="C:female germ cell nucleus"/>
    <property type="evidence" value="ECO:0007669"/>
    <property type="project" value="Ensembl"/>
</dbReference>
<dbReference type="GO" id="GO:0000786">
    <property type="term" value="C:nucleosome"/>
    <property type="evidence" value="ECO:0000318"/>
    <property type="project" value="GO_Central"/>
</dbReference>
<dbReference type="GO" id="GO:0005634">
    <property type="term" value="C:nucleus"/>
    <property type="evidence" value="ECO:0000318"/>
    <property type="project" value="GO_Central"/>
</dbReference>
<dbReference type="GO" id="GO:0003677">
    <property type="term" value="F:DNA binding"/>
    <property type="evidence" value="ECO:0007669"/>
    <property type="project" value="UniProtKB-KW"/>
</dbReference>
<dbReference type="GO" id="GO:0046982">
    <property type="term" value="F:protein heterodimerization activity"/>
    <property type="evidence" value="ECO:0007669"/>
    <property type="project" value="InterPro"/>
</dbReference>
<dbReference type="GO" id="GO:0030527">
    <property type="term" value="F:structural constituent of chromatin"/>
    <property type="evidence" value="ECO:0000318"/>
    <property type="project" value="GO_Central"/>
</dbReference>
<dbReference type="GO" id="GO:0031507">
    <property type="term" value="P:heterochromatin formation"/>
    <property type="evidence" value="ECO:0000318"/>
    <property type="project" value="GO_Central"/>
</dbReference>
<dbReference type="CDD" id="cd00074">
    <property type="entry name" value="HFD_H2A"/>
    <property type="match status" value="1"/>
</dbReference>
<dbReference type="FunFam" id="1.10.20.10:FF:000103">
    <property type="entry name" value="Histone H2A type 1"/>
    <property type="match status" value="1"/>
</dbReference>
<dbReference type="Gene3D" id="1.10.20.10">
    <property type="entry name" value="Histone, subunit A"/>
    <property type="match status" value="1"/>
</dbReference>
<dbReference type="InterPro" id="IPR009072">
    <property type="entry name" value="Histone-fold"/>
</dbReference>
<dbReference type="InterPro" id="IPR002119">
    <property type="entry name" value="Histone_H2A"/>
</dbReference>
<dbReference type="InterPro" id="IPR007125">
    <property type="entry name" value="Histone_H2A/H2B/H3"/>
</dbReference>
<dbReference type="InterPro" id="IPR032454">
    <property type="entry name" value="Histone_H2A_C"/>
</dbReference>
<dbReference type="InterPro" id="IPR032458">
    <property type="entry name" value="Histone_H2A_CS"/>
</dbReference>
<dbReference type="PANTHER" id="PTHR23430">
    <property type="entry name" value="HISTONE H2A"/>
    <property type="match status" value="1"/>
</dbReference>
<dbReference type="Pfam" id="PF00125">
    <property type="entry name" value="Histone"/>
    <property type="match status" value="1"/>
</dbReference>
<dbReference type="Pfam" id="PF16211">
    <property type="entry name" value="Histone_H2A_C"/>
    <property type="match status" value="1"/>
</dbReference>
<dbReference type="PRINTS" id="PR00620">
    <property type="entry name" value="HISTONEH2A"/>
</dbReference>
<dbReference type="SMART" id="SM00414">
    <property type="entry name" value="H2A"/>
    <property type="match status" value="1"/>
</dbReference>
<dbReference type="SUPFAM" id="SSF47113">
    <property type="entry name" value="Histone-fold"/>
    <property type="match status" value="1"/>
</dbReference>
<dbReference type="PROSITE" id="PS00046">
    <property type="entry name" value="HISTONE_H2A"/>
    <property type="match status" value="1"/>
</dbReference>
<comment type="function">
    <text>Core component of nucleosome. Nucleosomes wrap and compact DNA into chromatin, limiting DNA accessibility to the cellular machineries which require DNA as a template. Histones thereby play a central role in transcription regulation, DNA repair, DNA replication and chromosomal stability. DNA accessibility is regulated via a complex set of post-translational modifications of histones, also called histone code, and nucleosome remodeling.</text>
</comment>
<comment type="subunit">
    <text>The nucleosome is a histone octamer containing two molecules each of H2A, H2B, H3 and H4 assembled in one H3-H4 heterotetramer and two H2A-H2B heterodimers. The octamer wraps approximately 147 bp of DNA.</text>
</comment>
<comment type="subcellular location">
    <subcellularLocation>
        <location>Nucleus</location>
    </subcellularLocation>
    <subcellularLocation>
        <location>Chromosome</location>
    </subcellularLocation>
</comment>
<comment type="tissue specificity">
    <text>Testis.</text>
</comment>
<comment type="domain">
    <text>The [ST]-Q motif constitutes a recognition sequence for kinases from the PI3/PI4-kinase family.</text>
</comment>
<comment type="PTM">
    <text evidence="2">Deiminated on Arg-4 in granulocytes upon calcium entry.</text>
</comment>
<comment type="PTM">
    <text evidence="2">Monoubiquitination of Lys-120 (H2AK119Ub) by RING1, TRIM37 and RNF2/RING2 complex gives a specific tag for epigenetic transcriptional repression and participates in X chromosome inactivation of female mammals. It is involved in the initiation of both imprinted and random X inactivation. Ubiquitinated H2A is enriched in inactive X chromosome chromatin. Ubiquitination of H2A functions downstream of methylation of 'Lys-27' of histone H3 (H3K27me). H2AK119Ub by RNF2/RING2 can also be induced by ultraviolet and may be involved in DNA repair. Following DNA double-strand breaks (DSBs), it is ubiquitinated through 'Lys-63' linkage of ubiquitin moieties by the E2 ligase UBE2N and the E3 ligases RNF8 and RNF168, leading to the recruitment of repair proteins to sites of DNA damage. Ubiquitination at Lys-14 and Lys-16 (H2AK13Ub and H2AK15Ub, respectively) in response to DNA damage is initiated by RNF168 that mediates monoubiquitination at these 2 sites, and 'Lys-63'-linked ubiquitin are then conjugated to monoubiquitin; RNF8 is able to extend 'Lys-63'-linked ubiquitin chains in vitro. H2AK119Ub and ionizing radiation-induced 'Lys-63'-linked ubiquitination (H2AK13Ub and H2AK15Ub) are distinct events.</text>
</comment>
<comment type="PTM">
    <text evidence="2">Phosphorylation on Ser-2 (H2AS1ph) is enhanced during mitosis. Phosphorylation on Ser-2 by RPS6KA5/MSK1 directly represses transcription. Acetylation of H3 inhibits Ser-2 phosphorylation by RPS6KA5/MSK1. Phosphorylation at Thr-121 (H2AT120ph) by DCAF1 is present in the regulatory region of many tumor suppresor genes and down-regulates their transcription.</text>
</comment>
<comment type="PTM">
    <text evidence="3">Symmetric dimethylation on Arg-4 by the PRDM1/PRMT5 complex may play a crucial role in the germ-cell lineage.</text>
</comment>
<comment type="PTM">
    <text evidence="2">Glutamine methylation at Gln-105 (H2AQ104me) by FBL is specifically dedicated to polymerase I. It is present at 35S ribosomal DNA locus and impairs binding of the FACT complex.</text>
</comment>
<comment type="PTM">
    <text evidence="2">Crotonylation (Kcr) is specifically present in male germ cells and marks testis-specific genes in post-meiotic cells, including X-linked genes that escape sex chromosome inactivation in haploid cells. Crotonylation marks active promoters and enhancers and confers resistance to transcriptional repressors. It is also associated with post-meiotically activated genes on autosomes.</text>
</comment>
<comment type="PTM">
    <text evidence="1">Lactylated in macrophages by EP300/P300 by using lactoyl-CoA directly derived from endogenous or exogenous lactate, leading to stimulates gene transcription.</text>
</comment>
<comment type="similarity">
    <text evidence="5">Belongs to the histone H2A family.</text>
</comment>
<reference key="1">
    <citation type="journal article" date="1991" name="Nucleic Acids Res.">
        <title>Presence of a bi-directional S phase-specific transcription regulatory element in the promoter shared by testis-specific TH2A and TH2B histone genes.</title>
        <authorList>
            <person name="Huh N.E."/>
            <person name="Hwang I."/>
            <person name="Lim K."/>
            <person name="You K.H."/>
            <person name="Chae C.-B."/>
        </authorList>
    </citation>
    <scope>NUCLEOTIDE SEQUENCE [GENOMIC DNA]</scope>
    <source>
        <strain>Sprague-Dawley</strain>
        <tissue>Testis</tissue>
    </source>
</reference>
<feature type="initiator methionine" description="Removed" evidence="5">
    <location>
        <position position="1"/>
    </location>
</feature>
<feature type="chain" id="PRO_0000055276" description="Histone H2A type 4">
    <location>
        <begin position="2"/>
        <end position="130"/>
    </location>
</feature>
<feature type="short sequence motif" description="[ST]-Q motif">
    <location>
        <begin position="127"/>
        <end position="128"/>
    </location>
</feature>
<feature type="modified residue" description="Phosphoserine; by RPS6KA5" evidence="2">
    <location>
        <position position="2"/>
    </location>
</feature>
<feature type="modified residue" description="Citrulline; alternate" evidence="2">
    <location>
        <position position="4"/>
    </location>
</feature>
<feature type="modified residue" description="Symmetric dimethylarginine; by PRMT5; alternate" evidence="3">
    <location>
        <position position="4"/>
    </location>
</feature>
<feature type="modified residue" description="N6-(2-hydroxyisobutyryl)lysine; alternate" evidence="2">
    <location>
        <position position="6"/>
    </location>
</feature>
<feature type="modified residue" description="N6-acetyllysine; alternate" evidence="4">
    <location>
        <position position="6"/>
    </location>
</feature>
<feature type="modified residue" description="N6-(2-hydroxyisobutyryl)lysine; alternate" evidence="2">
    <location>
        <position position="10"/>
    </location>
</feature>
<feature type="modified residue" description="N6-acetyllysine; alternate" evidence="4">
    <location>
        <position position="10"/>
    </location>
</feature>
<feature type="modified residue" description="N6-lactoyllysine; alternate" evidence="1">
    <location>
        <position position="10"/>
    </location>
</feature>
<feature type="modified residue" description="N6-(2-hydroxyisobutyryl)lysine" evidence="2">
    <location>
        <position position="75"/>
    </location>
</feature>
<feature type="modified residue" description="N6-(2-hydroxyisobutyryl)lysine" evidence="2">
    <location>
        <position position="76"/>
    </location>
</feature>
<feature type="modified residue" description="N6-(2-hydroxyisobutyryl)lysine" evidence="2">
    <location>
        <position position="96"/>
    </location>
</feature>
<feature type="modified residue" description="N6-glutaryllysine; alternate" evidence="2">
    <location>
        <position position="96"/>
    </location>
</feature>
<feature type="modified residue" description="N5-methylglutamine" evidence="2">
    <location>
        <position position="105"/>
    </location>
</feature>
<feature type="modified residue" description="N6-(2-hydroxyisobutyryl)lysine; alternate" evidence="2">
    <location>
        <position position="119"/>
    </location>
</feature>
<feature type="modified residue" description="N6-crotonyllysine; alternate" evidence="2">
    <location>
        <position position="119"/>
    </location>
</feature>
<feature type="modified residue" description="N6-glutaryllysine; alternate" evidence="2">
    <location>
        <position position="119"/>
    </location>
</feature>
<feature type="modified residue" description="N6-crotonyllysine" evidence="2">
    <location>
        <position position="120"/>
    </location>
</feature>
<feature type="modified residue" description="N6-glutaryllysine; alternate" evidence="2">
    <location>
        <position position="120"/>
    </location>
</feature>
<feature type="modified residue" description="Phosphothreonine; by DCAF1" evidence="2">
    <location>
        <position position="121"/>
    </location>
</feature>
<feature type="modified residue" description="N6-crotonyllysine; alternate" evidence="2">
    <location>
        <position position="126"/>
    </location>
</feature>
<feature type="modified residue" description="N6-glutaryllysine; alternate" evidence="2">
    <location>
        <position position="126"/>
    </location>
</feature>